<organism>
    <name type="scientific">Streptococcus gordonii (strain Challis / ATCC 35105 / BCRC 15272 / CH1 / DL1 / V288)</name>
    <dbReference type="NCBI Taxonomy" id="467705"/>
    <lineage>
        <taxon>Bacteria</taxon>
        <taxon>Bacillati</taxon>
        <taxon>Bacillota</taxon>
        <taxon>Bacilli</taxon>
        <taxon>Lactobacillales</taxon>
        <taxon>Streptococcaceae</taxon>
        <taxon>Streptococcus</taxon>
    </lineage>
</organism>
<evidence type="ECO:0000255" key="1">
    <source>
        <dbReference type="HAMAP-Rule" id="MF_00384"/>
    </source>
</evidence>
<accession>A8AWE1</accession>
<keyword id="KW-0028">Amino-acid biosynthesis</keyword>
<keyword id="KW-0067">ATP-binding</keyword>
<keyword id="KW-0963">Cytoplasm</keyword>
<keyword id="KW-0418">Kinase</keyword>
<keyword id="KW-0547">Nucleotide-binding</keyword>
<keyword id="KW-1185">Reference proteome</keyword>
<keyword id="KW-0791">Threonine biosynthesis</keyword>
<keyword id="KW-0808">Transferase</keyword>
<protein>
    <recommendedName>
        <fullName evidence="1">Homoserine kinase</fullName>
        <shortName evidence="1">HK</shortName>
        <shortName evidence="1">HSK</shortName>
        <ecNumber evidence="1">2.7.1.39</ecNumber>
    </recommendedName>
</protein>
<dbReference type="EC" id="2.7.1.39" evidence="1"/>
<dbReference type="EMBL" id="CP000725">
    <property type="protein sequence ID" value="ABV09361.1"/>
    <property type="molecule type" value="Genomic_DNA"/>
</dbReference>
<dbReference type="RefSeq" id="WP_012000261.1">
    <property type="nucleotide sequence ID" value="NC_009785.1"/>
</dbReference>
<dbReference type="SMR" id="A8AWE1"/>
<dbReference type="STRING" id="467705.SGO_0802"/>
<dbReference type="KEGG" id="sgo:SGO_0802"/>
<dbReference type="eggNOG" id="COG0083">
    <property type="taxonomic scope" value="Bacteria"/>
</dbReference>
<dbReference type="HOGENOM" id="CLU_041243_0_0_9"/>
<dbReference type="UniPathway" id="UPA00050">
    <property type="reaction ID" value="UER00064"/>
</dbReference>
<dbReference type="Proteomes" id="UP000001131">
    <property type="component" value="Chromosome"/>
</dbReference>
<dbReference type="GO" id="GO:0005737">
    <property type="term" value="C:cytoplasm"/>
    <property type="evidence" value="ECO:0007669"/>
    <property type="project" value="UniProtKB-SubCell"/>
</dbReference>
<dbReference type="GO" id="GO:0005524">
    <property type="term" value="F:ATP binding"/>
    <property type="evidence" value="ECO:0007669"/>
    <property type="project" value="UniProtKB-UniRule"/>
</dbReference>
<dbReference type="GO" id="GO:0004413">
    <property type="term" value="F:homoserine kinase activity"/>
    <property type="evidence" value="ECO:0007669"/>
    <property type="project" value="UniProtKB-UniRule"/>
</dbReference>
<dbReference type="GO" id="GO:0009088">
    <property type="term" value="P:threonine biosynthetic process"/>
    <property type="evidence" value="ECO:0007669"/>
    <property type="project" value="UniProtKB-UniRule"/>
</dbReference>
<dbReference type="Gene3D" id="3.30.230.10">
    <property type="match status" value="1"/>
</dbReference>
<dbReference type="Gene3D" id="3.30.70.890">
    <property type="entry name" value="GHMP kinase, C-terminal domain"/>
    <property type="match status" value="1"/>
</dbReference>
<dbReference type="HAMAP" id="MF_00384">
    <property type="entry name" value="Homoser_kinase"/>
    <property type="match status" value="1"/>
</dbReference>
<dbReference type="InterPro" id="IPR013750">
    <property type="entry name" value="GHMP_kinase_C_dom"/>
</dbReference>
<dbReference type="InterPro" id="IPR036554">
    <property type="entry name" value="GHMP_kinase_C_sf"/>
</dbReference>
<dbReference type="InterPro" id="IPR006204">
    <property type="entry name" value="GHMP_kinase_N_dom"/>
</dbReference>
<dbReference type="InterPro" id="IPR006203">
    <property type="entry name" value="GHMP_knse_ATP-bd_CS"/>
</dbReference>
<dbReference type="InterPro" id="IPR000870">
    <property type="entry name" value="Homoserine_kinase"/>
</dbReference>
<dbReference type="InterPro" id="IPR020568">
    <property type="entry name" value="Ribosomal_Su5_D2-typ_SF"/>
</dbReference>
<dbReference type="InterPro" id="IPR014721">
    <property type="entry name" value="Ribsml_uS5_D2-typ_fold_subgr"/>
</dbReference>
<dbReference type="NCBIfam" id="TIGR00191">
    <property type="entry name" value="thrB"/>
    <property type="match status" value="1"/>
</dbReference>
<dbReference type="PANTHER" id="PTHR20861:SF1">
    <property type="entry name" value="HOMOSERINE KINASE"/>
    <property type="match status" value="1"/>
</dbReference>
<dbReference type="PANTHER" id="PTHR20861">
    <property type="entry name" value="HOMOSERINE/4-DIPHOSPHOCYTIDYL-2-C-METHYL-D-ERYTHRITOL KINASE"/>
    <property type="match status" value="1"/>
</dbReference>
<dbReference type="Pfam" id="PF08544">
    <property type="entry name" value="GHMP_kinases_C"/>
    <property type="match status" value="1"/>
</dbReference>
<dbReference type="Pfam" id="PF00288">
    <property type="entry name" value="GHMP_kinases_N"/>
    <property type="match status" value="1"/>
</dbReference>
<dbReference type="PIRSF" id="PIRSF000676">
    <property type="entry name" value="Homoser_kin"/>
    <property type="match status" value="1"/>
</dbReference>
<dbReference type="PRINTS" id="PR00958">
    <property type="entry name" value="HOMSERKINASE"/>
</dbReference>
<dbReference type="SUPFAM" id="SSF55060">
    <property type="entry name" value="GHMP Kinase, C-terminal domain"/>
    <property type="match status" value="1"/>
</dbReference>
<dbReference type="SUPFAM" id="SSF54211">
    <property type="entry name" value="Ribosomal protein S5 domain 2-like"/>
    <property type="match status" value="1"/>
</dbReference>
<dbReference type="PROSITE" id="PS00627">
    <property type="entry name" value="GHMP_KINASES_ATP"/>
    <property type="match status" value="1"/>
</dbReference>
<comment type="function">
    <text evidence="1">Catalyzes the ATP-dependent phosphorylation of L-homoserine to L-homoserine phosphate.</text>
</comment>
<comment type="catalytic activity">
    <reaction evidence="1">
        <text>L-homoserine + ATP = O-phospho-L-homoserine + ADP + H(+)</text>
        <dbReference type="Rhea" id="RHEA:13985"/>
        <dbReference type="ChEBI" id="CHEBI:15378"/>
        <dbReference type="ChEBI" id="CHEBI:30616"/>
        <dbReference type="ChEBI" id="CHEBI:57476"/>
        <dbReference type="ChEBI" id="CHEBI:57590"/>
        <dbReference type="ChEBI" id="CHEBI:456216"/>
        <dbReference type="EC" id="2.7.1.39"/>
    </reaction>
</comment>
<comment type="pathway">
    <text evidence="1">Amino-acid biosynthesis; L-threonine biosynthesis; L-threonine from L-aspartate: step 4/5.</text>
</comment>
<comment type="subcellular location">
    <subcellularLocation>
        <location evidence="1">Cytoplasm</location>
    </subcellularLocation>
</comment>
<comment type="similarity">
    <text evidence="1">Belongs to the GHMP kinase family. Homoserine kinase subfamily.</text>
</comment>
<proteinExistence type="inferred from homology"/>
<sequence>MKIIVPATSANIGPGFDSVGVAVSKYLTIEVLEERDEWLIEHDLNPRIPKDKRNLLIKVALQLAPNLQPYRLKMTSDIPLARGLGSSSSVIVAGIELANQLGKLDLTDDEKLDWANKIEGHPDNVAPAIFGNLVISSVFKGAVSSVRADFPECSFIAYVPKYELKTRDSRSVLPFKFSYKEAVAASSIANVAIAALLQGDLVKAGRAIESDRFHERFRQKLVREFPNIKKLAKKHGAYATYLSGAGPTIMILAPKDRAKLIQTRIEGCKYNGEVFILDVDRDGVRVEF</sequence>
<feature type="chain" id="PRO_1000080132" description="Homoserine kinase">
    <location>
        <begin position="1"/>
        <end position="288"/>
    </location>
</feature>
<feature type="binding site" evidence="1">
    <location>
        <begin position="79"/>
        <end position="89"/>
    </location>
    <ligand>
        <name>ATP</name>
        <dbReference type="ChEBI" id="CHEBI:30616"/>
    </ligand>
</feature>
<reference key="1">
    <citation type="journal article" date="2007" name="J. Bacteriol.">
        <title>Genome-wide transcriptional changes in Streptococcus gordonii in response to competence signaling peptide.</title>
        <authorList>
            <person name="Vickerman M.M."/>
            <person name="Iobst S."/>
            <person name="Jesionowski A.M."/>
            <person name="Gill S.R."/>
        </authorList>
    </citation>
    <scope>NUCLEOTIDE SEQUENCE [LARGE SCALE GENOMIC DNA]</scope>
    <source>
        <strain>Challis / ATCC 35105 / BCRC 15272 / CH1 / DL1 / V288</strain>
    </source>
</reference>
<name>KHSE_STRGC</name>
<gene>
    <name evidence="1" type="primary">thrB</name>
    <name type="ordered locus">SGO_0802</name>
</gene>